<sequence length="616" mass="68840">MKENVASMIVFLLLLFLNIRLLKGQSPPGKPFIFKCRSPEKETFTCWWRPGADGGLPTNYTLTYHKEGETITHECPDYKTGGPNSCYFSKKHTSIWTIYIITVNATNQMGSSVSDPRYVDVTYIVEPDPPVNLTLEVKHPEDRKPYLWVKWLPPTLVDVRSGWLTLQYEIRLKPEKAAEWETHFAGQQTQFKILSLYPGQKYLVQVRCKPDHGFWSVWSPESSIQIPNDFTMKDITVWIFVAVLSTIICLIMVWAVALKGYSMVTCIFPPVPGPKIKGFDTHLLEKGKSEELLSAFGCQDFPPTADCEDLLVEFLEVDDSEDQQLMPAHSKEHSGPGMKPTDLDPDNDSGRGSCDSPSLLSEKCEEPQANPSTFHTPEVIEQPEKPKANVTHTWDPQTISLVGKMPYLSVNGSKSSTWPLLQPGQHNTNSPYHNIADMCKLATSLDKIDKDALQSSKTTEAAGEEKATKQREVESSHSKAEQDTGWLLPKEKPPFISPKPLDYVEIHKVNKDGALSLLLKQKENGDQTGKAGTPETSKEYAKVSRVMDNNILVLVQDPGAQNVALFEESTKEAPPSPSQNQAEKDLSSFSTAPSDCRLQQGGLDYLDPACFMHSLH</sequence>
<organism>
    <name type="scientific">Oryctolagus cuniculus</name>
    <name type="common">Rabbit</name>
    <dbReference type="NCBI Taxonomy" id="9986"/>
    <lineage>
        <taxon>Eukaryota</taxon>
        <taxon>Metazoa</taxon>
        <taxon>Chordata</taxon>
        <taxon>Craniata</taxon>
        <taxon>Vertebrata</taxon>
        <taxon>Euteleostomi</taxon>
        <taxon>Mammalia</taxon>
        <taxon>Eutheria</taxon>
        <taxon>Euarchontoglires</taxon>
        <taxon>Glires</taxon>
        <taxon>Lagomorpha</taxon>
        <taxon>Leporidae</taxon>
        <taxon>Oryctolagus</taxon>
    </lineage>
</organism>
<evidence type="ECO:0000250" key="1"/>
<evidence type="ECO:0000255" key="2"/>
<evidence type="ECO:0000255" key="3">
    <source>
        <dbReference type="PROSITE-ProRule" id="PRU00316"/>
    </source>
</evidence>
<evidence type="ECO:0000256" key="4">
    <source>
        <dbReference type="SAM" id="MobiDB-lite"/>
    </source>
</evidence>
<evidence type="ECO:0000305" key="5"/>
<comment type="function">
    <text>This is a receptor for the anterior pituitary hormone prolactin.</text>
</comment>
<comment type="subunit">
    <text evidence="1">Interacts with SMARCA1. Interacts with NEK3 and VAV2 and this interaction is prolactin-dependent.</text>
</comment>
<comment type="subcellular location">
    <subcellularLocation>
        <location>Membrane</location>
        <topology>Single-pass type I membrane protein</topology>
    </subcellularLocation>
</comment>
<comment type="domain">
    <text>The WSXWS motif appears to be necessary for proper protein folding and thereby efficient intracellular transport and cell-surface receptor binding.</text>
</comment>
<comment type="domain">
    <text>The box 1 motif is required for JAK interaction and/or activation.</text>
</comment>
<comment type="similarity">
    <text evidence="5">Belongs to the type I cytokine receptor family. Type 1 subfamily.</text>
</comment>
<name>PRLR_RABIT</name>
<reference key="1">
    <citation type="journal article" date="1989" name="Proc. Natl. Acad. Sci. U.S.A.">
        <title>Identification and sequence analysis of a second form of prolactin receptor by molecular cloning of complementary DNA from rabbit mammary gland.</title>
        <authorList>
            <person name="Edery M."/>
            <person name="Jolicoeur C."/>
            <person name="Levi-Meyrueis C."/>
            <person name="Dusanter-Fourt I."/>
            <person name="Petridou B."/>
            <person name="Boutin J.-M."/>
            <person name="Lesueur L."/>
            <person name="Kelly P.A."/>
            <person name="Djiane J."/>
        </authorList>
    </citation>
    <scope>NUCLEOTIDE SEQUENCE [MRNA]</scope>
    <source>
        <tissue>Mammary gland</tissue>
    </source>
</reference>
<reference key="2">
    <citation type="journal article" date="1990" name="Int. J. Biochem.">
        <title>Purification and partial sequence of the rabbit mammary gland prolactin receptor.</title>
        <authorList>
            <person name="Waters M.J."/>
            <person name="Spencer S.A."/>
            <person name="Hamlin G."/>
            <person name="Henzel W.J."/>
            <person name="Wood W.I."/>
        </authorList>
    </citation>
    <scope>PROTEIN SEQUENCE OF 41-66; 90-108; 150-201 AND 277-285</scope>
</reference>
<reference key="3">
    <citation type="journal article" date="1997" name="Proteins">
        <title>Homology modeling of rabbit prolactin hormone complexed with its receptor.</title>
        <authorList>
            <person name="Halaby D."/>
            <person name="Thoreau E."/>
            <person name="Djiane J."/>
            <person name="Mornon J.-P."/>
        </authorList>
    </citation>
    <scope>3D-STRUCTURE MODELING OF 23-228</scope>
</reference>
<dbReference type="EMBL" id="J04510">
    <property type="protein sequence ID" value="AAA31457.1"/>
    <property type="molecule type" value="mRNA"/>
</dbReference>
<dbReference type="PIR" id="A30304">
    <property type="entry name" value="A30304"/>
</dbReference>
<dbReference type="RefSeq" id="NP_001075700.1">
    <property type="nucleotide sequence ID" value="NM_001082231.1"/>
</dbReference>
<dbReference type="RefSeq" id="XP_017199967.1">
    <property type="nucleotide sequence ID" value="XM_017344478.1"/>
</dbReference>
<dbReference type="RefSeq" id="XP_017199969.1">
    <property type="nucleotide sequence ID" value="XM_017344480.1"/>
</dbReference>
<dbReference type="RefSeq" id="XP_017199970.1">
    <property type="nucleotide sequence ID" value="XM_017344481.1"/>
</dbReference>
<dbReference type="RefSeq" id="XP_017199971.1">
    <property type="nucleotide sequence ID" value="XM_017344482.1"/>
</dbReference>
<dbReference type="RefSeq" id="XP_017199972.1">
    <property type="nucleotide sequence ID" value="XM_017344483.1"/>
</dbReference>
<dbReference type="RefSeq" id="XP_017199973.1">
    <property type="nucleotide sequence ID" value="XM_017344484.1"/>
</dbReference>
<dbReference type="SMR" id="P14787"/>
<dbReference type="FunCoup" id="P14787">
    <property type="interactions" value="35"/>
</dbReference>
<dbReference type="STRING" id="9986.ENSOCUP00000030796"/>
<dbReference type="GlyCosmos" id="P14787">
    <property type="glycosylation" value="3 sites, No reported glycans"/>
</dbReference>
<dbReference type="PaxDb" id="9986-ENSOCUP00000004567"/>
<dbReference type="Ensembl" id="ENSOCUT00000005269.2">
    <property type="protein sequence ID" value="ENSOCUP00000004567.2"/>
    <property type="gene ID" value="ENSOCUG00000005274.3"/>
</dbReference>
<dbReference type="GeneID" id="100009046"/>
<dbReference type="KEGG" id="ocu:100009046"/>
<dbReference type="CTD" id="5618"/>
<dbReference type="eggNOG" id="ENOG502R22A">
    <property type="taxonomic scope" value="Eukaryota"/>
</dbReference>
<dbReference type="GeneTree" id="ENSGT00940000154851"/>
<dbReference type="HOGENOM" id="CLU_017892_2_0_1"/>
<dbReference type="InParanoid" id="P14787"/>
<dbReference type="OMA" id="ANITCTW"/>
<dbReference type="OrthoDB" id="8858139at2759"/>
<dbReference type="TreeFam" id="TF330851"/>
<dbReference type="Proteomes" id="UP000001811">
    <property type="component" value="Chromosome 11"/>
</dbReference>
<dbReference type="Bgee" id="ENSOCUG00000005274">
    <property type="expression patterns" value="Expressed in liver and 15 other cell types or tissues"/>
</dbReference>
<dbReference type="GO" id="GO:0009897">
    <property type="term" value="C:external side of plasma membrane"/>
    <property type="evidence" value="ECO:0007669"/>
    <property type="project" value="TreeGrafter"/>
</dbReference>
<dbReference type="GO" id="GO:0043235">
    <property type="term" value="C:receptor complex"/>
    <property type="evidence" value="ECO:0007669"/>
    <property type="project" value="TreeGrafter"/>
</dbReference>
<dbReference type="GO" id="GO:0019955">
    <property type="term" value="F:cytokine binding"/>
    <property type="evidence" value="ECO:0007669"/>
    <property type="project" value="TreeGrafter"/>
</dbReference>
<dbReference type="GO" id="GO:0046872">
    <property type="term" value="F:metal ion binding"/>
    <property type="evidence" value="ECO:0007669"/>
    <property type="project" value="UniProtKB-KW"/>
</dbReference>
<dbReference type="GO" id="GO:0017046">
    <property type="term" value="F:peptide hormone binding"/>
    <property type="evidence" value="ECO:0007669"/>
    <property type="project" value="TreeGrafter"/>
</dbReference>
<dbReference type="GO" id="GO:0004925">
    <property type="term" value="F:prolactin receptor activity"/>
    <property type="evidence" value="ECO:0007669"/>
    <property type="project" value="TreeGrafter"/>
</dbReference>
<dbReference type="GO" id="GO:0008284">
    <property type="term" value="P:positive regulation of cell population proliferation"/>
    <property type="evidence" value="ECO:0007669"/>
    <property type="project" value="TreeGrafter"/>
</dbReference>
<dbReference type="CDD" id="cd00063">
    <property type="entry name" value="FN3"/>
    <property type="match status" value="2"/>
</dbReference>
<dbReference type="FunFam" id="2.60.40.10:FF:000287">
    <property type="entry name" value="Prolactin receptor"/>
    <property type="match status" value="1"/>
</dbReference>
<dbReference type="FunFam" id="2.60.40.10:FF:000358">
    <property type="entry name" value="Prolactin receptor"/>
    <property type="match status" value="1"/>
</dbReference>
<dbReference type="Gene3D" id="2.60.40.10">
    <property type="entry name" value="Immunoglobulins"/>
    <property type="match status" value="2"/>
</dbReference>
<dbReference type="InterPro" id="IPR003961">
    <property type="entry name" value="FN3_dom"/>
</dbReference>
<dbReference type="InterPro" id="IPR036116">
    <property type="entry name" value="FN3_sf"/>
</dbReference>
<dbReference type="InterPro" id="IPR015152">
    <property type="entry name" value="Growth/epo_recpt_lig-bind"/>
</dbReference>
<dbReference type="InterPro" id="IPR013783">
    <property type="entry name" value="Ig-like_fold"/>
</dbReference>
<dbReference type="InterPro" id="IPR003528">
    <property type="entry name" value="Long_hematopoietin_rcpt_CS"/>
</dbReference>
<dbReference type="InterPro" id="IPR050379">
    <property type="entry name" value="Type-I_Cytokine_Rcpt"/>
</dbReference>
<dbReference type="PANTHER" id="PTHR23036">
    <property type="entry name" value="CYTOKINE RECEPTOR"/>
    <property type="match status" value="1"/>
</dbReference>
<dbReference type="PANTHER" id="PTHR23036:SF86">
    <property type="entry name" value="PROLACTIN RECEPTOR"/>
    <property type="match status" value="1"/>
</dbReference>
<dbReference type="Pfam" id="PF09067">
    <property type="entry name" value="EpoR_lig-bind"/>
    <property type="match status" value="1"/>
</dbReference>
<dbReference type="SMART" id="SM00060">
    <property type="entry name" value="FN3"/>
    <property type="match status" value="2"/>
</dbReference>
<dbReference type="SUPFAM" id="SSF49265">
    <property type="entry name" value="Fibronectin type III"/>
    <property type="match status" value="2"/>
</dbReference>
<dbReference type="PROSITE" id="PS50853">
    <property type="entry name" value="FN3"/>
    <property type="match status" value="2"/>
</dbReference>
<dbReference type="PROSITE" id="PS01352">
    <property type="entry name" value="HEMATOPO_REC_L_F1"/>
    <property type="match status" value="1"/>
</dbReference>
<protein>
    <recommendedName>
        <fullName>Prolactin receptor</fullName>
        <shortName>PRL-R</shortName>
    </recommendedName>
</protein>
<proteinExistence type="evidence at protein level"/>
<keyword id="KW-0903">Direct protein sequencing</keyword>
<keyword id="KW-1015">Disulfide bond</keyword>
<keyword id="KW-0325">Glycoprotein</keyword>
<keyword id="KW-0472">Membrane</keyword>
<keyword id="KW-0479">Metal-binding</keyword>
<keyword id="KW-0675">Receptor</keyword>
<keyword id="KW-1185">Reference proteome</keyword>
<keyword id="KW-0677">Repeat</keyword>
<keyword id="KW-0732">Signal</keyword>
<keyword id="KW-0812">Transmembrane</keyword>
<keyword id="KW-1133">Transmembrane helix</keyword>
<keyword id="KW-0862">Zinc</keyword>
<gene>
    <name type="primary">PRLR</name>
</gene>
<accession>P14787</accession>
<feature type="signal peptide" evidence="1">
    <location>
        <begin position="1"/>
        <end position="24"/>
    </location>
</feature>
<feature type="chain" id="PRO_0000010980" description="Prolactin receptor">
    <location>
        <begin position="25"/>
        <end position="616"/>
    </location>
</feature>
<feature type="topological domain" description="Extracellular" evidence="2">
    <location>
        <begin position="25"/>
        <end position="234"/>
    </location>
</feature>
<feature type="transmembrane region" description="Helical" evidence="2">
    <location>
        <begin position="235"/>
        <end position="258"/>
    </location>
</feature>
<feature type="topological domain" description="Cytoplasmic" evidence="2">
    <location>
        <begin position="259"/>
        <end position="616"/>
    </location>
</feature>
<feature type="domain" description="Fibronectin type-III 1" evidence="3">
    <location>
        <begin position="27"/>
        <end position="128"/>
    </location>
</feature>
<feature type="domain" description="Fibronectin type-III 2" evidence="3">
    <location>
        <begin position="129"/>
        <end position="229"/>
    </location>
</feature>
<feature type="region of interest" description="Disordered" evidence="4">
    <location>
        <begin position="326"/>
        <end position="375"/>
    </location>
</feature>
<feature type="region of interest" description="Disordered" evidence="4">
    <location>
        <begin position="454"/>
        <end position="492"/>
    </location>
</feature>
<feature type="region of interest" description="Disordered" evidence="4">
    <location>
        <begin position="568"/>
        <end position="593"/>
    </location>
</feature>
<feature type="short sequence motif" description="WSXWS motif">
    <location>
        <begin position="215"/>
        <end position="219"/>
    </location>
</feature>
<feature type="short sequence motif" description="Box 1 motif">
    <location>
        <begin position="267"/>
        <end position="275"/>
    </location>
</feature>
<feature type="compositionally biased region" description="Basic and acidic residues" evidence="4">
    <location>
        <begin position="463"/>
        <end position="482"/>
    </location>
</feature>
<feature type="binding site" evidence="1">
    <location>
        <position position="211"/>
    </location>
    <ligand>
        <name>Zn(2+)</name>
        <dbReference type="ChEBI" id="CHEBI:29105"/>
    </ligand>
</feature>
<feature type="binding site" evidence="1">
    <location>
        <position position="212"/>
    </location>
    <ligand>
        <name>Zn(2+)</name>
        <dbReference type="ChEBI" id="CHEBI:29105"/>
    </ligand>
</feature>
<feature type="glycosylation site" description="N-linked (GlcNAc...) asparagine" evidence="2">
    <location>
        <position position="59"/>
    </location>
</feature>
<feature type="glycosylation site" description="N-linked (GlcNAc...) asparagine" evidence="2">
    <location>
        <position position="104"/>
    </location>
</feature>
<feature type="glycosylation site" description="N-linked (GlcNAc...) asparagine" evidence="2">
    <location>
        <position position="132"/>
    </location>
</feature>
<feature type="disulfide bond" evidence="1">
    <location>
        <begin position="36"/>
        <end position="46"/>
    </location>
</feature>
<feature type="disulfide bond" evidence="1">
    <location>
        <begin position="75"/>
        <end position="86"/>
    </location>
</feature>
<feature type="sequence conflict" description="In Ref. 2; AA sequence." evidence="5" ref="2">
    <original>T</original>
    <variation>N</variation>
    <location>
        <position position="106"/>
    </location>
</feature>
<feature type="sequence conflict" description="In Ref. 2; AA sequence." evidence="5" ref="2">
    <original>G</original>
    <variation>P</variation>
    <location>
        <position position="278"/>
    </location>
</feature>
<feature type="sequence conflict" description="In Ref. 2; AA sequence." evidence="5" ref="2">
    <original>D</original>
    <variation>F</variation>
    <location>
        <position position="280"/>
    </location>
</feature>